<protein>
    <recommendedName>
        <fullName>ATP-dependent RNA helicase DHH1</fullName>
        <ecNumber>3.6.4.13</ecNumber>
    </recommendedName>
</protein>
<organism>
    <name type="scientific">Scheffersomyces stipitis (strain ATCC 58785 / CBS 6054 / NBRC 10063 / NRRL Y-11545)</name>
    <name type="common">Yeast</name>
    <name type="synonym">Pichia stipitis</name>
    <dbReference type="NCBI Taxonomy" id="322104"/>
    <lineage>
        <taxon>Eukaryota</taxon>
        <taxon>Fungi</taxon>
        <taxon>Dikarya</taxon>
        <taxon>Ascomycota</taxon>
        <taxon>Saccharomycotina</taxon>
        <taxon>Pichiomycetes</taxon>
        <taxon>Debaryomycetaceae</taxon>
        <taxon>Scheffersomyces</taxon>
    </lineage>
</organism>
<keyword id="KW-0067">ATP-binding</keyword>
<keyword id="KW-0963">Cytoplasm</keyword>
<keyword id="KW-0347">Helicase</keyword>
<keyword id="KW-0378">Hydrolase</keyword>
<keyword id="KW-0507">mRNA processing</keyword>
<keyword id="KW-0509">mRNA transport</keyword>
<keyword id="KW-0547">Nucleotide-binding</keyword>
<keyword id="KW-1185">Reference proteome</keyword>
<keyword id="KW-0694">RNA-binding</keyword>
<keyword id="KW-0810">Translation regulation</keyword>
<keyword id="KW-0813">Transport</keyword>
<feature type="chain" id="PRO_0000285140" description="ATP-dependent RNA helicase DHH1">
    <location>
        <begin position="1"/>
        <end position="509"/>
    </location>
</feature>
<feature type="domain" description="Helicase ATP-binding" evidence="2">
    <location>
        <begin position="61"/>
        <end position="231"/>
    </location>
</feature>
<feature type="domain" description="Helicase C-terminal" evidence="3">
    <location>
        <begin position="241"/>
        <end position="401"/>
    </location>
</feature>
<feature type="region of interest" description="Disordered" evidence="4">
    <location>
        <begin position="1"/>
        <end position="27"/>
    </location>
</feature>
<feature type="region of interest" description="Disordered" evidence="4">
    <location>
        <begin position="438"/>
        <end position="509"/>
    </location>
</feature>
<feature type="short sequence motif" description="Q motif">
    <location>
        <begin position="30"/>
        <end position="58"/>
    </location>
</feature>
<feature type="short sequence motif" description="DEAD box">
    <location>
        <begin position="179"/>
        <end position="182"/>
    </location>
</feature>
<feature type="compositionally biased region" description="Polar residues" evidence="4">
    <location>
        <begin position="1"/>
        <end position="14"/>
    </location>
</feature>
<feature type="compositionally biased region" description="Low complexity" evidence="4">
    <location>
        <begin position="441"/>
        <end position="493"/>
    </location>
</feature>
<feature type="binding site" evidence="2">
    <location>
        <begin position="74"/>
        <end position="81"/>
    </location>
    <ligand>
        <name>ATP</name>
        <dbReference type="ChEBI" id="CHEBI:30616"/>
    </ligand>
</feature>
<name>DHH1_PICST</name>
<accession>A3LWX3</accession>
<reference key="1">
    <citation type="journal article" date="2007" name="Nat. Biotechnol.">
        <title>Genome sequence of the lignocellulose-bioconverting and xylose-fermenting yeast Pichia stipitis.</title>
        <authorList>
            <person name="Jeffries T.W."/>
            <person name="Grigoriev I.V."/>
            <person name="Grimwood J."/>
            <person name="Laplaza J.M."/>
            <person name="Aerts A."/>
            <person name="Salamov A."/>
            <person name="Schmutz J."/>
            <person name="Lindquist E."/>
            <person name="Dehal P."/>
            <person name="Shapiro H."/>
            <person name="Jin Y.-S."/>
            <person name="Passoth V."/>
            <person name="Richardson P.M."/>
        </authorList>
    </citation>
    <scope>NUCLEOTIDE SEQUENCE [LARGE SCALE GENOMIC DNA]</scope>
    <source>
        <strain>ATCC 58785 / CBS 6054 / NBRC 10063 / NRRL Y-11545</strain>
    </source>
</reference>
<evidence type="ECO:0000250" key="1"/>
<evidence type="ECO:0000255" key="2">
    <source>
        <dbReference type="PROSITE-ProRule" id="PRU00541"/>
    </source>
</evidence>
<evidence type="ECO:0000255" key="3">
    <source>
        <dbReference type="PROSITE-ProRule" id="PRU00542"/>
    </source>
</evidence>
<evidence type="ECO:0000256" key="4">
    <source>
        <dbReference type="SAM" id="MobiDB-lite"/>
    </source>
</evidence>
<evidence type="ECO:0000305" key="5"/>
<dbReference type="EC" id="3.6.4.13"/>
<dbReference type="EMBL" id="CP000500">
    <property type="protein sequence ID" value="ABN67709.1"/>
    <property type="molecule type" value="Genomic_DNA"/>
</dbReference>
<dbReference type="RefSeq" id="XP_001385738.1">
    <property type="nucleotide sequence ID" value="XM_001385701.1"/>
</dbReference>
<dbReference type="SMR" id="A3LWX3"/>
<dbReference type="FunCoup" id="A3LWX3">
    <property type="interactions" value="1381"/>
</dbReference>
<dbReference type="STRING" id="322104.A3LWX3"/>
<dbReference type="GeneID" id="4840004"/>
<dbReference type="KEGG" id="pic:PICST_90571"/>
<dbReference type="eggNOG" id="KOG0326">
    <property type="taxonomic scope" value="Eukaryota"/>
</dbReference>
<dbReference type="HOGENOM" id="CLU_003041_30_0_1"/>
<dbReference type="InParanoid" id="A3LWX3"/>
<dbReference type="OMA" id="TYEDRHT"/>
<dbReference type="OrthoDB" id="10265785at2759"/>
<dbReference type="Proteomes" id="UP000002258">
    <property type="component" value="Chromosome 6"/>
</dbReference>
<dbReference type="GO" id="GO:0098562">
    <property type="term" value="C:cytoplasmic side of membrane"/>
    <property type="evidence" value="ECO:0007669"/>
    <property type="project" value="EnsemblFungi"/>
</dbReference>
<dbReference type="GO" id="GO:0010494">
    <property type="term" value="C:cytoplasmic stress granule"/>
    <property type="evidence" value="ECO:0007669"/>
    <property type="project" value="EnsemblFungi"/>
</dbReference>
<dbReference type="GO" id="GO:0000932">
    <property type="term" value="C:P-body"/>
    <property type="evidence" value="ECO:0007669"/>
    <property type="project" value="UniProtKB-SubCell"/>
</dbReference>
<dbReference type="GO" id="GO:0005524">
    <property type="term" value="F:ATP binding"/>
    <property type="evidence" value="ECO:0007669"/>
    <property type="project" value="UniProtKB-KW"/>
</dbReference>
<dbReference type="GO" id="GO:0016887">
    <property type="term" value="F:ATP hydrolysis activity"/>
    <property type="evidence" value="ECO:0007669"/>
    <property type="project" value="EnsemblFungi"/>
</dbReference>
<dbReference type="GO" id="GO:0003682">
    <property type="term" value="F:chromatin binding"/>
    <property type="evidence" value="ECO:0007669"/>
    <property type="project" value="EnsemblFungi"/>
</dbReference>
<dbReference type="GO" id="GO:0003729">
    <property type="term" value="F:mRNA binding"/>
    <property type="evidence" value="ECO:0007669"/>
    <property type="project" value="EnsemblFungi"/>
</dbReference>
<dbReference type="GO" id="GO:0003724">
    <property type="term" value="F:RNA helicase activity"/>
    <property type="evidence" value="ECO:0007669"/>
    <property type="project" value="UniProtKB-EC"/>
</dbReference>
<dbReference type="GO" id="GO:0042149">
    <property type="term" value="P:cellular response to glucose starvation"/>
    <property type="evidence" value="ECO:0007669"/>
    <property type="project" value="EnsemblFungi"/>
</dbReference>
<dbReference type="GO" id="GO:0006995">
    <property type="term" value="P:cellular response to nitrogen starvation"/>
    <property type="evidence" value="ECO:0007669"/>
    <property type="project" value="EnsemblFungi"/>
</dbReference>
<dbReference type="GO" id="GO:0000290">
    <property type="term" value="P:deadenylation-dependent decapping of nuclear-transcribed mRNA"/>
    <property type="evidence" value="ECO:0007669"/>
    <property type="project" value="EnsemblFungi"/>
</dbReference>
<dbReference type="GO" id="GO:0036267">
    <property type="term" value="P:invasive filamentous growth"/>
    <property type="evidence" value="ECO:0007669"/>
    <property type="project" value="EnsemblFungi"/>
</dbReference>
<dbReference type="GO" id="GO:0006397">
    <property type="term" value="P:mRNA processing"/>
    <property type="evidence" value="ECO:0007669"/>
    <property type="project" value="UniProtKB-KW"/>
</dbReference>
<dbReference type="GO" id="GO:0051028">
    <property type="term" value="P:mRNA transport"/>
    <property type="evidence" value="ECO:0007669"/>
    <property type="project" value="UniProtKB-KW"/>
</dbReference>
<dbReference type="GO" id="GO:0045900">
    <property type="term" value="P:negative regulation of translational elongation"/>
    <property type="evidence" value="ECO:0007669"/>
    <property type="project" value="EnsemblFungi"/>
</dbReference>
<dbReference type="GO" id="GO:0033962">
    <property type="term" value="P:P-body assembly"/>
    <property type="evidence" value="ECO:0007669"/>
    <property type="project" value="EnsemblFungi"/>
</dbReference>
<dbReference type="GO" id="GO:0045727">
    <property type="term" value="P:positive regulation of translation"/>
    <property type="evidence" value="ECO:0007669"/>
    <property type="project" value="EnsemblFungi"/>
</dbReference>
<dbReference type="GO" id="GO:0007124">
    <property type="term" value="P:pseudohyphal growth"/>
    <property type="evidence" value="ECO:0007669"/>
    <property type="project" value="EnsemblFungi"/>
</dbReference>
<dbReference type="GO" id="GO:0010603">
    <property type="term" value="P:regulation of cytoplasmic mRNA processing body assembly"/>
    <property type="evidence" value="ECO:0007669"/>
    <property type="project" value="EnsemblFungi"/>
</dbReference>
<dbReference type="GO" id="GO:0000749">
    <property type="term" value="P:response to pheromone triggering conjugation with cellular fusion"/>
    <property type="evidence" value="ECO:0007669"/>
    <property type="project" value="EnsemblFungi"/>
</dbReference>
<dbReference type="GO" id="GO:0034063">
    <property type="term" value="P:stress granule assembly"/>
    <property type="evidence" value="ECO:0007669"/>
    <property type="project" value="EnsemblFungi"/>
</dbReference>
<dbReference type="CDD" id="cd17940">
    <property type="entry name" value="DEADc_DDX6"/>
    <property type="match status" value="1"/>
</dbReference>
<dbReference type="CDD" id="cd18787">
    <property type="entry name" value="SF2_C_DEAD"/>
    <property type="match status" value="1"/>
</dbReference>
<dbReference type="FunFam" id="3.40.50.300:FF:000114">
    <property type="entry name" value="ATP-dependent RNA helicase DDX6"/>
    <property type="match status" value="1"/>
</dbReference>
<dbReference type="FunFam" id="3.40.50.300:FF:000364">
    <property type="entry name" value="ATP-dependent RNA helicase DDX6"/>
    <property type="match status" value="1"/>
</dbReference>
<dbReference type="Gene3D" id="3.40.50.300">
    <property type="entry name" value="P-loop containing nucleotide triphosphate hydrolases"/>
    <property type="match status" value="2"/>
</dbReference>
<dbReference type="InterPro" id="IPR011545">
    <property type="entry name" value="DEAD/DEAH_box_helicase_dom"/>
</dbReference>
<dbReference type="InterPro" id="IPR014001">
    <property type="entry name" value="Helicase_ATP-bd"/>
</dbReference>
<dbReference type="InterPro" id="IPR001650">
    <property type="entry name" value="Helicase_C-like"/>
</dbReference>
<dbReference type="InterPro" id="IPR027417">
    <property type="entry name" value="P-loop_NTPase"/>
</dbReference>
<dbReference type="InterPro" id="IPR000629">
    <property type="entry name" value="RNA-helicase_DEAD-box_CS"/>
</dbReference>
<dbReference type="InterPro" id="IPR014014">
    <property type="entry name" value="RNA_helicase_DEAD_Q_motif"/>
</dbReference>
<dbReference type="PANTHER" id="PTHR47960">
    <property type="entry name" value="DEAD-BOX ATP-DEPENDENT RNA HELICASE 50"/>
    <property type="match status" value="1"/>
</dbReference>
<dbReference type="Pfam" id="PF00270">
    <property type="entry name" value="DEAD"/>
    <property type="match status" value="1"/>
</dbReference>
<dbReference type="Pfam" id="PF00271">
    <property type="entry name" value="Helicase_C"/>
    <property type="match status" value="1"/>
</dbReference>
<dbReference type="SMART" id="SM00487">
    <property type="entry name" value="DEXDc"/>
    <property type="match status" value="1"/>
</dbReference>
<dbReference type="SMART" id="SM00490">
    <property type="entry name" value="HELICc"/>
    <property type="match status" value="1"/>
</dbReference>
<dbReference type="SUPFAM" id="SSF52540">
    <property type="entry name" value="P-loop containing nucleoside triphosphate hydrolases"/>
    <property type="match status" value="1"/>
</dbReference>
<dbReference type="PROSITE" id="PS00039">
    <property type="entry name" value="DEAD_ATP_HELICASE"/>
    <property type="match status" value="1"/>
</dbReference>
<dbReference type="PROSITE" id="PS51192">
    <property type="entry name" value="HELICASE_ATP_BIND_1"/>
    <property type="match status" value="1"/>
</dbReference>
<dbReference type="PROSITE" id="PS51194">
    <property type="entry name" value="HELICASE_CTER"/>
    <property type="match status" value="1"/>
</dbReference>
<dbReference type="PROSITE" id="PS51195">
    <property type="entry name" value="Q_MOTIF"/>
    <property type="match status" value="1"/>
</dbReference>
<gene>
    <name type="primary">DHH1</name>
    <name type="ORF">PICST_90571</name>
</gene>
<comment type="function">
    <text evidence="1">ATP-dependent RNA helicase involved in mRNA turnover, and more specifically in mRNA decapping by activating the decapping enzyme DCP1. Is involved in G1/S DNA-damage checkpoint recovery, probably through the regulation of the translational status of a subset of mRNAs. May also have a role in translation and mRNA nuclear export (By similarity).</text>
</comment>
<comment type="catalytic activity">
    <reaction>
        <text>ATP + H2O = ADP + phosphate + H(+)</text>
        <dbReference type="Rhea" id="RHEA:13065"/>
        <dbReference type="ChEBI" id="CHEBI:15377"/>
        <dbReference type="ChEBI" id="CHEBI:15378"/>
        <dbReference type="ChEBI" id="CHEBI:30616"/>
        <dbReference type="ChEBI" id="CHEBI:43474"/>
        <dbReference type="ChEBI" id="CHEBI:456216"/>
        <dbReference type="EC" id="3.6.4.13"/>
    </reaction>
</comment>
<comment type="subcellular location">
    <subcellularLocation>
        <location evidence="1">Cytoplasm</location>
        <location evidence="1">P-body</location>
    </subcellularLocation>
    <text evidence="1">Is concentrated in several cytoplasmic foci called P bodies (or cytoplasmic processing bodies) which represent sites of mRNA decapping and 5' to 3' exonucleotidic decay.</text>
</comment>
<comment type="domain">
    <text>The Q motif is unique to and characteristic of the DEAD box family of RNA helicases and controls ATP binding and hydrolysis.</text>
</comment>
<comment type="similarity">
    <text evidence="5">Belongs to the DEAD box helicase family. DDX6/DHH1 subfamily.</text>
</comment>
<sequence>MSEQNWKQNLNLPQRDTRPQTEDVLNTKGKSFEDFNLKRELLMGIFEAGFEKPSPIQEESIPMALAGRDVLARAKNGTGKTASFIIPSLQQIKPKLNKIQALILVPTRELALQTSQVVRTLGKHLGIQCMVTTGGTSLKDDILRLNDPVHVLVGTPGRVLDLAARSVADLSECPLFVMDEADKMLSREFKGIIEQILEFFPKNRQSLLFSATFPLAVKSFMDKHLNKPYEINLMDELTLRGITQYYAFVEEKQKLHCLNTLFSKLQINQSIIFCNSTNRVELLAKKITELGYSCYYSHAKMPQQARNKVFHEFRQGKVRNLVCSDLLTRGIDIQAVNVVINFDFPKTAETYLHRIGRSGRFGHLGLAINLMSWNDRYSLYKIEQELGTEIKPIPATIDRKLYVADNEDAIPKPFKIEQLPKGNEKVHTRAGYEYKGQPEVQSGQQHAQQQLQPSQQPQQQLQQPQQPQAAPQGYPPAFNGYPPYQQYPPQAGGYPPPQFNGYQAAPGQQ</sequence>
<proteinExistence type="inferred from homology"/>